<evidence type="ECO:0000250" key="1"/>
<evidence type="ECO:0000255" key="2"/>
<evidence type="ECO:0000255" key="3">
    <source>
        <dbReference type="PROSITE-ProRule" id="PRU00219"/>
    </source>
</evidence>
<evidence type="ECO:0000256" key="4">
    <source>
        <dbReference type="SAM" id="MobiDB-lite"/>
    </source>
</evidence>
<evidence type="ECO:0000305" key="5"/>
<reference key="1">
    <citation type="journal article" date="1989" name="EMBO J.">
        <title>The globular domains of type VI collagen are related to the collagen-binding domains of cartilage matrix protein and von Willebrand factor.</title>
        <authorList>
            <person name="Koller E."/>
            <person name="Winterhalter K.H."/>
            <person name="Trueb B."/>
        </authorList>
    </citation>
    <scope>NUCLEOTIDE SEQUENCE [MRNA] (ISOFORM 1)</scope>
</reference>
<reference key="2">
    <citation type="journal article" date="1991" name="Eur. J. Biochem.">
        <title>Complete structure of the chicken alpha 2(VI) collagen gene.</title>
        <authorList>
            <person name="Hayman A.R."/>
            <person name="Koppel J."/>
            <person name="Trueb B."/>
        </authorList>
    </citation>
    <scope>NUCLEOTIDE SEQUENCE [GENOMIC DNA] (ISOFORMS 1 AND 2)</scope>
</reference>
<reference key="3">
    <citation type="journal article" date="1991" name="Nucleic Acids Res.">
        <title>The promoter of the chicken alpha 2(VI) collagen gene has features characteristic of house-keeping genes and of proto-oncogenes.</title>
        <authorList>
            <person name="Koller E."/>
            <person name="Hayman A.R."/>
            <person name="Trueb B."/>
        </authorList>
    </citation>
    <scope>NUCLEOTIDE SEQUENCE [GENOMIC DNA] OF 8-38</scope>
    <source>
        <tissue>Liver</tissue>
    </source>
</reference>
<reference key="4">
    <citation type="journal article" date="1989" name="J. Biol. Chem.">
        <title>Molecular cloning of chicken type VI collagen: primary structure of the subunit alpha-2(VI)-pepsin.</title>
        <authorList>
            <person name="Trueb B."/>
            <person name="Schaeren-Wiemers N."/>
            <person name="Schreier T."/>
            <person name="Winterhalter K.H."/>
        </authorList>
    </citation>
    <scope>NUCLEOTIDE SEQUENCE [GENOMIC RNA] OF 77-796</scope>
</reference>
<reference key="5">
    <citation type="journal article" date="1990" name="J. Biol. Chem.">
        <title>The triple-helical domain of alpha-2 (VI) collagen is encoded by 19 short exons that are multiples of 9 base pairs.</title>
        <authorList>
            <person name="Hayman A.R."/>
            <person name="Koeppel J."/>
            <person name="Winterhalter K.H."/>
            <person name="Trueb B."/>
        </authorList>
    </citation>
    <scope>NUCLEOTIDE SEQUENCE [GENOMIC DNA] OF 273-680</scope>
</reference>
<dbReference type="EMBL" id="X15041">
    <property type="protein sequence ID" value="CAA33144.1"/>
    <property type="molecule type" value="mRNA"/>
</dbReference>
<dbReference type="EMBL" id="X56659">
    <property type="protein sequence ID" value="CAA39982.1"/>
    <property type="molecule type" value="Genomic_DNA"/>
</dbReference>
<dbReference type="EMBL" id="X56659">
    <property type="protein sequence ID" value="CAA39981.1"/>
    <property type="molecule type" value="Genomic_DNA"/>
</dbReference>
<dbReference type="EMBL" id="X56595">
    <property type="protein sequence ID" value="CAA39933.1"/>
    <property type="molecule type" value="Genomic_DNA"/>
</dbReference>
<dbReference type="EMBL" id="J04425">
    <property type="protein sequence ID" value="AAA48705.1"/>
    <property type="molecule type" value="Genomic_RNA"/>
</dbReference>
<dbReference type="EMBL" id="J05475">
    <property type="protein sequence ID" value="AAA49132.1"/>
    <property type="molecule type" value="Genomic_DNA"/>
</dbReference>
<dbReference type="PIR" id="S23377">
    <property type="entry name" value="S23377"/>
</dbReference>
<dbReference type="PIR" id="S23378">
    <property type="entry name" value="S04111"/>
</dbReference>
<dbReference type="RefSeq" id="NP_990679.1">
    <molecule id="P15988-1"/>
    <property type="nucleotide sequence ID" value="NM_205348.4"/>
</dbReference>
<dbReference type="RefSeq" id="XP_015144623.1">
    <molecule id="P15988-2"/>
    <property type="nucleotide sequence ID" value="XM_015289137.3"/>
</dbReference>
<dbReference type="RefSeq" id="XP_046777102.1">
    <molecule id="P15988-2"/>
    <property type="nucleotide sequence ID" value="XM_046921146.1"/>
</dbReference>
<dbReference type="SMR" id="P15988"/>
<dbReference type="FunCoup" id="P15988">
    <property type="interactions" value="1249"/>
</dbReference>
<dbReference type="STRING" id="9031.ENSGALP00000043563"/>
<dbReference type="GlyCosmos" id="P15988">
    <property type="glycosylation" value="5 sites, No reported glycans"/>
</dbReference>
<dbReference type="GlyGen" id="P15988">
    <property type="glycosylation" value="7 sites"/>
</dbReference>
<dbReference type="PaxDb" id="9031-ENSGALP00000042596"/>
<dbReference type="Ensembl" id="ENSGALT00010034628.1">
    <molecule id="P15988-2"/>
    <property type="protein sequence ID" value="ENSGALP00010020322.1"/>
    <property type="gene ID" value="ENSGALG00010014389.1"/>
</dbReference>
<dbReference type="Ensembl" id="ENSGALT00010034635.1">
    <molecule id="P15988-1"/>
    <property type="protein sequence ID" value="ENSGALP00010020328.1"/>
    <property type="gene ID" value="ENSGALG00010014389.1"/>
</dbReference>
<dbReference type="GeneID" id="396292"/>
<dbReference type="KEGG" id="gga:396292"/>
<dbReference type="CTD" id="1292"/>
<dbReference type="VEuPathDB" id="HostDB:geneid_396292"/>
<dbReference type="GeneTree" id="ENSGT00940000155682"/>
<dbReference type="InParanoid" id="P15988"/>
<dbReference type="OMA" id="LIFRPME"/>
<dbReference type="OrthoDB" id="9944853at2759"/>
<dbReference type="PhylomeDB" id="P15988"/>
<dbReference type="TreeFam" id="TF331207"/>
<dbReference type="Reactome" id="R-GGA-1650814">
    <property type="pathway name" value="Collagen biosynthesis and modifying enzymes"/>
</dbReference>
<dbReference type="PRO" id="PR:P15988"/>
<dbReference type="Proteomes" id="UP000000539">
    <property type="component" value="Chromosome 7"/>
</dbReference>
<dbReference type="Bgee" id="ENSGALG00000039216">
    <property type="expression patterns" value="Expressed in colon and 11 other cell types or tissues"/>
</dbReference>
<dbReference type="GO" id="GO:0005581">
    <property type="term" value="C:collagen trimer"/>
    <property type="evidence" value="ECO:0007669"/>
    <property type="project" value="UniProtKB-KW"/>
</dbReference>
<dbReference type="GO" id="GO:0062023">
    <property type="term" value="C:collagen-containing extracellular matrix"/>
    <property type="evidence" value="ECO:0000318"/>
    <property type="project" value="GO_Central"/>
</dbReference>
<dbReference type="GO" id="GO:0005576">
    <property type="term" value="C:extracellular region"/>
    <property type="evidence" value="ECO:0007669"/>
    <property type="project" value="UniProtKB-KW"/>
</dbReference>
<dbReference type="GO" id="GO:0007155">
    <property type="term" value="P:cell adhesion"/>
    <property type="evidence" value="ECO:0007669"/>
    <property type="project" value="UniProtKB-KW"/>
</dbReference>
<dbReference type="CDD" id="cd00198">
    <property type="entry name" value="vWFA"/>
    <property type="match status" value="1"/>
</dbReference>
<dbReference type="FunFam" id="3.40.50.410:FF:000027">
    <property type="entry name" value="collagen alpha-2(VI) chain isoform X1"/>
    <property type="match status" value="1"/>
</dbReference>
<dbReference type="FunFam" id="3.40.50.410:FF:000052">
    <property type="entry name" value="collagen alpha-2(VI) chain isoform X1"/>
    <property type="match status" value="1"/>
</dbReference>
<dbReference type="FunFam" id="3.40.50.410:FF:000026">
    <property type="entry name" value="Collagen, type VI, alpha 1"/>
    <property type="match status" value="1"/>
</dbReference>
<dbReference type="Gene3D" id="3.40.50.410">
    <property type="entry name" value="von Willebrand factor, type A domain"/>
    <property type="match status" value="3"/>
</dbReference>
<dbReference type="InterPro" id="IPR008160">
    <property type="entry name" value="Collagen"/>
</dbReference>
<dbReference type="InterPro" id="IPR052229">
    <property type="entry name" value="Collagen-VI/PIF"/>
</dbReference>
<dbReference type="InterPro" id="IPR002035">
    <property type="entry name" value="VWF_A"/>
</dbReference>
<dbReference type="InterPro" id="IPR036465">
    <property type="entry name" value="vWFA_dom_sf"/>
</dbReference>
<dbReference type="PANTHER" id="PTHR22588">
    <property type="entry name" value="VWFA DOMAIN-CONTAINING PROTEIN"/>
    <property type="match status" value="1"/>
</dbReference>
<dbReference type="PANTHER" id="PTHR22588:SF3">
    <property type="entry name" value="VWFA DOMAIN-CONTAINING PROTEIN"/>
    <property type="match status" value="1"/>
</dbReference>
<dbReference type="Pfam" id="PF01391">
    <property type="entry name" value="Collagen"/>
    <property type="match status" value="4"/>
</dbReference>
<dbReference type="Pfam" id="PF00092">
    <property type="entry name" value="VWA"/>
    <property type="match status" value="3"/>
</dbReference>
<dbReference type="PRINTS" id="PR00453">
    <property type="entry name" value="VWFADOMAIN"/>
</dbReference>
<dbReference type="SMART" id="SM00327">
    <property type="entry name" value="VWA"/>
    <property type="match status" value="3"/>
</dbReference>
<dbReference type="SUPFAM" id="SSF53300">
    <property type="entry name" value="vWA-like"/>
    <property type="match status" value="3"/>
</dbReference>
<dbReference type="PROSITE" id="PS50234">
    <property type="entry name" value="VWFA"/>
    <property type="match status" value="3"/>
</dbReference>
<gene>
    <name type="primary">COL6A2</name>
</gene>
<proteinExistence type="evidence at transcript level"/>
<organism>
    <name type="scientific">Gallus gallus</name>
    <name type="common">Chicken</name>
    <dbReference type="NCBI Taxonomy" id="9031"/>
    <lineage>
        <taxon>Eukaryota</taxon>
        <taxon>Metazoa</taxon>
        <taxon>Chordata</taxon>
        <taxon>Craniata</taxon>
        <taxon>Vertebrata</taxon>
        <taxon>Euteleostomi</taxon>
        <taxon>Archelosauria</taxon>
        <taxon>Archosauria</taxon>
        <taxon>Dinosauria</taxon>
        <taxon>Saurischia</taxon>
        <taxon>Theropoda</taxon>
        <taxon>Coelurosauria</taxon>
        <taxon>Aves</taxon>
        <taxon>Neognathae</taxon>
        <taxon>Galloanserae</taxon>
        <taxon>Galliformes</taxon>
        <taxon>Phasianidae</taxon>
        <taxon>Phasianinae</taxon>
        <taxon>Gallus</taxon>
    </lineage>
</organism>
<comment type="function">
    <text>Collagen VI acts as a cell-binding protein.</text>
</comment>
<comment type="subunit">
    <text>Trimers composed of three different chains: alpha 1(VI), alpha 2(VI), and alpha 3(VI).</text>
</comment>
<comment type="subcellular location">
    <subcellularLocation>
        <location evidence="1">Secreted</location>
        <location evidence="1">Extracellular space</location>
        <location evidence="1">Extracellular matrix</location>
    </subcellularLocation>
</comment>
<comment type="alternative products">
    <event type="alternative splicing"/>
    <isoform>
        <id>P15988-1</id>
        <name>1</name>
        <sequence type="displayed"/>
    </isoform>
    <isoform>
        <id>P15988-2</id>
        <name>2</name>
        <sequence type="described" ref="VSP_001165 VSP_001166"/>
    </isoform>
</comment>
<comment type="PTM">
    <text>Prolines at the third position of the tripeptide repeating unit (G-X-Y) are hydroxylated in some or all of the chains.</text>
</comment>
<comment type="similarity">
    <text evidence="5">Belongs to the type VI collagen family.</text>
</comment>
<accession>P15988</accession>
<accession>Q6LEJ6</accession>
<accession>Q90583</accession>
<accession>Q90604</accession>
<sequence>MSRRTAEMFQQAFLSTLLCVALVPLHAQFDDEPVTSCTEKTDCPISVYFVIDTSESIALQTVPIQSLVDQIKQFIPRFIEKLENEVYQNQVSITWMFGGLHYSDVVEIYSPLTRSKDTYLTKLRAIRYLGRGTFTDCAISNMTQQFQSQTARDVKFAVVITDGHVTGSPCGGMKMQAERARDMGIKLFAVAPSEDVYEQGLREIASPPHDLYRSNYTITPKDALHIDENTIERIIKAMKHEAYAECYKMTCLEIAGPAGPKGYRGQKGAKGNMGEPGSPGLKGRQGDPGIEGPIGYPGPKGVPGLKGEKGEIGSDGRRGAAGLAGRNGTDGQKGKLGRIGPPGCKGDRGDKGPDGYPGDAGDQGERGDEGMKGDPGRPGRSGPPGPPGEKGSPGIPGNPGAQGPGGTKGRKGETGPPGPKGEPGRRGDPGTKGSKGGPGAKGERGDPGPEGPRGLPGEVGNKGARGDQGLPGPRGPTGAVGEPGNIGSRGDPGDLGPRGDAGPPGPKGDRGRPGFSYPGPRGPQGDKGEKGQPGPKGGRGELGPKGTQGTKGEKGEPGDPGPRGEPGTRGPPGEAGPEGTPGPPGDPGLTDCDVMTYVRETCGCCDCEKRCGALDIMFVIDSSESIGYTNFTLEKNFVVNVVSRLGSIAKDPKSETGARVGVVQYSHEGTFEAIKLDDERINSLSSFKEAVKRLEWIAGGTWTPSALQFAYNKLIKESRREKAQVFAVVITDGRYDPRDDDKNLGALCGRDVLVNTIGIGDIFDQPEQSETLVSIACNEPQRVQKMRLFSDLVAEEFIDKMEDMLCPDPQIVCPELPCQTELAVAQCTQRPVDIVFLLDGSERIGEQNFHRAHHFVEQVAQQLTLARRNDDNMNARIALLQYGSEREQNVVFPLTYNLTEISNALAQIKYLDSSSNIGSAIIHAINNIVLSPGNGQRVARRNAELSFVFITDGITGSKNLEEAINSMKKQDVMPTVVALGSDVDMDVLLKLGLGDRAAIFREKDYESLSQPSFFDRFIRWIC</sequence>
<feature type="signal peptide">
    <location>
        <begin position="1"/>
        <end position="27"/>
    </location>
</feature>
<feature type="chain" id="PRO_0000005834" description="Collagen alpha-2(VI) chain">
    <location>
        <begin position="28"/>
        <end position="1022"/>
    </location>
</feature>
<feature type="domain" description="VWFA 1" evidence="3">
    <location>
        <begin position="44"/>
        <end position="168"/>
    </location>
</feature>
<feature type="domain" description="VWFA 2" evidence="3">
    <location>
        <begin position="613"/>
        <end position="738"/>
    </location>
</feature>
<feature type="domain" description="VWFA 3" evidence="3">
    <location>
        <begin position="833"/>
        <end position="957"/>
    </location>
</feature>
<feature type="region of interest" description="Nonhelical region">
    <location>
        <begin position="28"/>
        <end position="255"/>
    </location>
</feature>
<feature type="region of interest" description="Triple-helical region">
    <location>
        <begin position="256"/>
        <end position="590"/>
    </location>
</feature>
<feature type="region of interest" description="Disordered" evidence="4">
    <location>
        <begin position="263"/>
        <end position="587"/>
    </location>
</feature>
<feature type="region of interest" description="Interruption in collagenous region">
    <location>
        <begin position="514"/>
        <end position="519"/>
    </location>
</feature>
<feature type="region of interest" description="Nonhelical region">
    <location>
        <begin position="591"/>
        <end position="1022"/>
    </location>
</feature>
<feature type="short sequence motif" description="Cell attachment site" evidence="2">
    <location>
        <begin position="348"/>
        <end position="350"/>
    </location>
</feature>
<feature type="short sequence motif" description="Cell attachment site" evidence="2">
    <location>
        <begin position="366"/>
        <end position="368"/>
    </location>
</feature>
<feature type="short sequence motif" description="Cell attachment site" evidence="2">
    <location>
        <begin position="426"/>
        <end position="428"/>
    </location>
</feature>
<feature type="short sequence motif" description="Cell attachment site" evidence="2">
    <location>
        <begin position="444"/>
        <end position="446"/>
    </location>
</feature>
<feature type="short sequence motif" description="Cell attachment site" evidence="2">
    <location>
        <begin position="465"/>
        <end position="467"/>
    </location>
</feature>
<feature type="short sequence motif" description="Cell attachment site" evidence="2">
    <location>
        <begin position="489"/>
        <end position="491"/>
    </location>
</feature>
<feature type="short sequence motif" description="Cell attachment site" evidence="2">
    <location>
        <begin position="498"/>
        <end position="500"/>
    </location>
</feature>
<feature type="compositionally biased region" description="Low complexity" evidence="4">
    <location>
        <begin position="287"/>
        <end position="299"/>
    </location>
</feature>
<feature type="compositionally biased region" description="Basic and acidic residues" evidence="4">
    <location>
        <begin position="306"/>
        <end position="318"/>
    </location>
</feature>
<feature type="compositionally biased region" description="Basic and acidic residues" evidence="4">
    <location>
        <begin position="363"/>
        <end position="377"/>
    </location>
</feature>
<feature type="compositionally biased region" description="Low complexity" evidence="4">
    <location>
        <begin position="389"/>
        <end position="399"/>
    </location>
</feature>
<feature type="compositionally biased region" description="Gly residues" evidence="4">
    <location>
        <begin position="534"/>
        <end position="543"/>
    </location>
</feature>
<feature type="glycosylation site" description="N-linked (GlcNAc...) asparagine" evidence="2">
    <location>
        <position position="141"/>
    </location>
</feature>
<feature type="glycosylation site" description="N-linked (GlcNAc...) asparagine" evidence="2">
    <location>
        <position position="215"/>
    </location>
</feature>
<feature type="glycosylation site" description="N-linked (GlcNAc...) asparagine" evidence="2">
    <location>
        <position position="327"/>
    </location>
</feature>
<feature type="glycosylation site" description="N-linked (GlcNAc...) asparagine" evidence="2">
    <location>
        <position position="630"/>
    </location>
</feature>
<feature type="glycosylation site" description="N-linked (GlcNAc...) asparagine" evidence="2">
    <location>
        <position position="897"/>
    </location>
</feature>
<feature type="splice variant" id="VSP_001165" description="In isoform 2." evidence="5">
    <original>ELAVAQCTQRPVDIVFLLDGSERIGEQNFHRAHHFVEQVAQQLTLARRNDDNMNARIALLQYGSEREQNVVFPLTYNLTEISNALAQIKYLDSSSNIG</original>
    <variation>DDRNPGNVNPLIFRPMEEGVNINIPSTIHSIAQFLNSTRETQDPRMYTQLVATLAFTAEKAKFATGNERQEWMDLFIDTFKMVHSEIVGDPETVLGLC</variation>
    <location>
        <begin position="821"/>
        <end position="918"/>
    </location>
</feature>
<feature type="splice variant" id="VSP_001166" description="In isoform 2." evidence="5">
    <location>
        <begin position="919"/>
        <end position="1022"/>
    </location>
</feature>
<feature type="sequence conflict" description="In Ref. 5; AAA49132." evidence="5" ref="5">
    <original>ARVGVVQYSHEGTFEAIKLDDER</original>
    <variation>LECVWGGAGGRSGDGQKKRVLDP</variation>
    <location>
        <begin position="658"/>
        <end position="680"/>
    </location>
</feature>
<name>CO6A2_CHICK</name>
<keyword id="KW-0025">Alternative splicing</keyword>
<keyword id="KW-0130">Cell adhesion</keyword>
<keyword id="KW-0176">Collagen</keyword>
<keyword id="KW-0272">Extracellular matrix</keyword>
<keyword id="KW-0325">Glycoprotein</keyword>
<keyword id="KW-0379">Hydroxylation</keyword>
<keyword id="KW-1185">Reference proteome</keyword>
<keyword id="KW-0677">Repeat</keyword>
<keyword id="KW-0964">Secreted</keyword>
<keyword id="KW-0732">Signal</keyword>
<protein>
    <recommendedName>
        <fullName>Collagen alpha-2(VI) chain</fullName>
    </recommendedName>
</protein>